<organism>
    <name type="scientific">Natronomonas pharaonis (strain ATCC 35678 / DSM 2160 / CIP 103997 / JCM 8858 / NBRC 14720 / NCIMB 2260 / Gabara)</name>
    <name type="common">Halobacterium pharaonis</name>
    <dbReference type="NCBI Taxonomy" id="348780"/>
    <lineage>
        <taxon>Archaea</taxon>
        <taxon>Methanobacteriati</taxon>
        <taxon>Methanobacteriota</taxon>
        <taxon>Stenosarchaea group</taxon>
        <taxon>Halobacteria</taxon>
        <taxon>Halobacteriales</taxon>
        <taxon>Haloarculaceae</taxon>
        <taxon>Natronomonas</taxon>
    </lineage>
</organism>
<proteinExistence type="inferred from homology"/>
<comment type="function">
    <text evidence="1">Specifically methylates the uridine in position 2552 of 23S rRNA at the 2'-O position of the ribose in the fully assembled 50S ribosomal subunit.</text>
</comment>
<comment type="catalytic activity">
    <reaction evidence="1">
        <text>uridine(2552) in 23S rRNA + S-adenosyl-L-methionine = 2'-O-methyluridine(2552) in 23S rRNA + S-adenosyl-L-homocysteine + H(+)</text>
        <dbReference type="Rhea" id="RHEA:42720"/>
        <dbReference type="Rhea" id="RHEA-COMP:10202"/>
        <dbReference type="Rhea" id="RHEA-COMP:10203"/>
        <dbReference type="ChEBI" id="CHEBI:15378"/>
        <dbReference type="ChEBI" id="CHEBI:57856"/>
        <dbReference type="ChEBI" id="CHEBI:59789"/>
        <dbReference type="ChEBI" id="CHEBI:65315"/>
        <dbReference type="ChEBI" id="CHEBI:74478"/>
        <dbReference type="EC" id="2.1.1.166"/>
    </reaction>
</comment>
<comment type="subcellular location">
    <subcellularLocation>
        <location evidence="1">Cytoplasm</location>
    </subcellularLocation>
</comment>
<comment type="similarity">
    <text evidence="1">Belongs to the class I-like SAM-binding methyltransferase superfamily. RNA methyltransferase RlmE family.</text>
</comment>
<feature type="chain" id="PRO_0000155571" description="Ribosomal RNA large subunit methyltransferase E">
    <location>
        <begin position="1"/>
        <end position="252"/>
    </location>
</feature>
<feature type="domain" description="TRAM" evidence="1">
    <location>
        <begin position="194"/>
        <end position="252"/>
    </location>
</feature>
<feature type="active site" description="Proton acceptor" evidence="1">
    <location>
        <position position="147"/>
    </location>
</feature>
<feature type="binding site" evidence="1">
    <location>
        <position position="48"/>
    </location>
    <ligand>
        <name>S-adenosyl-L-methionine</name>
        <dbReference type="ChEBI" id="CHEBI:59789"/>
    </ligand>
</feature>
<feature type="binding site" evidence="1">
    <location>
        <position position="50"/>
    </location>
    <ligand>
        <name>S-adenosyl-L-methionine</name>
        <dbReference type="ChEBI" id="CHEBI:59789"/>
    </ligand>
</feature>
<feature type="binding site" evidence="1">
    <location>
        <position position="68"/>
    </location>
    <ligand>
        <name>S-adenosyl-L-methionine</name>
        <dbReference type="ChEBI" id="CHEBI:59789"/>
    </ligand>
</feature>
<feature type="binding site" evidence="1">
    <location>
        <position position="84"/>
    </location>
    <ligand>
        <name>S-adenosyl-L-methionine</name>
        <dbReference type="ChEBI" id="CHEBI:59789"/>
    </ligand>
</feature>
<feature type="binding site" evidence="1">
    <location>
        <position position="107"/>
    </location>
    <ligand>
        <name>S-adenosyl-L-methionine</name>
        <dbReference type="ChEBI" id="CHEBI:59789"/>
    </ligand>
</feature>
<reference key="1">
    <citation type="journal article" date="2005" name="Genome Res.">
        <title>Living with two extremes: conclusions from the genome sequence of Natronomonas pharaonis.</title>
        <authorList>
            <person name="Falb M."/>
            <person name="Pfeiffer F."/>
            <person name="Palm P."/>
            <person name="Rodewald K."/>
            <person name="Hickmann V."/>
            <person name="Tittor J."/>
            <person name="Oesterhelt D."/>
        </authorList>
    </citation>
    <scope>NUCLEOTIDE SEQUENCE [LARGE SCALE GENOMIC DNA]</scope>
    <source>
        <strain>ATCC 35678 / DSM 2160 / CIP 103997 / JCM 8858 / NBRC 14720 / NCIMB 2260 / Gabara</strain>
    </source>
</reference>
<keyword id="KW-0963">Cytoplasm</keyword>
<keyword id="KW-0489">Methyltransferase</keyword>
<keyword id="KW-1185">Reference proteome</keyword>
<keyword id="KW-0698">rRNA processing</keyword>
<keyword id="KW-0949">S-adenosyl-L-methionine</keyword>
<keyword id="KW-0808">Transferase</keyword>
<name>RLME_NATPD</name>
<dbReference type="EC" id="2.1.1.166" evidence="1"/>
<dbReference type="EMBL" id="CR936257">
    <property type="protein sequence ID" value="CAI48710.1"/>
    <property type="molecule type" value="Genomic_DNA"/>
</dbReference>
<dbReference type="RefSeq" id="WP_011322346.1">
    <property type="nucleotide sequence ID" value="NC_007426.1"/>
</dbReference>
<dbReference type="SMR" id="Q3IT24"/>
<dbReference type="STRING" id="348780.NP_1238A"/>
<dbReference type="EnsemblBacteria" id="CAI48710">
    <property type="protein sequence ID" value="CAI48710"/>
    <property type="gene ID" value="NP_1238A"/>
</dbReference>
<dbReference type="GeneID" id="3701091"/>
<dbReference type="KEGG" id="nph:NP_1238A"/>
<dbReference type="eggNOG" id="arCOG00079">
    <property type="taxonomic scope" value="Archaea"/>
</dbReference>
<dbReference type="HOGENOM" id="CLU_009422_4_4_2"/>
<dbReference type="OrthoDB" id="26307at2157"/>
<dbReference type="Proteomes" id="UP000002698">
    <property type="component" value="Chromosome"/>
</dbReference>
<dbReference type="GO" id="GO:0005737">
    <property type="term" value="C:cytoplasm"/>
    <property type="evidence" value="ECO:0007669"/>
    <property type="project" value="UniProtKB-SubCell"/>
</dbReference>
<dbReference type="GO" id="GO:0008650">
    <property type="term" value="F:rRNA (uridine-2'-O-)-methyltransferase activity"/>
    <property type="evidence" value="ECO:0007669"/>
    <property type="project" value="UniProtKB-UniRule"/>
</dbReference>
<dbReference type="Gene3D" id="2.40.50.140">
    <property type="entry name" value="Nucleic acid-binding proteins"/>
    <property type="match status" value="1"/>
</dbReference>
<dbReference type="Gene3D" id="3.40.50.150">
    <property type="entry name" value="Vaccinia Virus protein VP39"/>
    <property type="match status" value="1"/>
</dbReference>
<dbReference type="HAMAP" id="MF_01547">
    <property type="entry name" value="RNA_methyltr_E"/>
    <property type="match status" value="1"/>
</dbReference>
<dbReference type="InterPro" id="IPR012340">
    <property type="entry name" value="NA-bd_OB-fold"/>
</dbReference>
<dbReference type="InterPro" id="IPR050082">
    <property type="entry name" value="RNA_methyltr_RlmE"/>
</dbReference>
<dbReference type="InterPro" id="IPR002877">
    <property type="entry name" value="RNA_MeTrfase_FtsJ_dom"/>
</dbReference>
<dbReference type="InterPro" id="IPR015507">
    <property type="entry name" value="rRNA-MeTfrase_E"/>
</dbReference>
<dbReference type="InterPro" id="IPR029063">
    <property type="entry name" value="SAM-dependent_MTases_sf"/>
</dbReference>
<dbReference type="InterPro" id="IPR002792">
    <property type="entry name" value="TRAM_dom"/>
</dbReference>
<dbReference type="PANTHER" id="PTHR10920:SF13">
    <property type="entry name" value="PRE-RRNA 2'-O-RIBOSE RNA METHYLTRANSFERASE FTSJ3"/>
    <property type="match status" value="1"/>
</dbReference>
<dbReference type="PANTHER" id="PTHR10920">
    <property type="entry name" value="RIBOSOMAL RNA METHYLTRANSFERASE"/>
    <property type="match status" value="1"/>
</dbReference>
<dbReference type="Pfam" id="PF01728">
    <property type="entry name" value="FtsJ"/>
    <property type="match status" value="1"/>
</dbReference>
<dbReference type="Pfam" id="PF01938">
    <property type="entry name" value="TRAM"/>
    <property type="match status" value="1"/>
</dbReference>
<dbReference type="SUPFAM" id="SSF50249">
    <property type="entry name" value="Nucleic acid-binding proteins"/>
    <property type="match status" value="1"/>
</dbReference>
<dbReference type="SUPFAM" id="SSF53335">
    <property type="entry name" value="S-adenosyl-L-methionine-dependent methyltransferases"/>
    <property type="match status" value="1"/>
</dbReference>
<dbReference type="PROSITE" id="PS50926">
    <property type="entry name" value="TRAM"/>
    <property type="match status" value="1"/>
</dbReference>
<accession>Q3IT24</accession>
<protein>
    <recommendedName>
        <fullName evidence="1">Ribosomal RNA large subunit methyltransferase E</fullName>
        <ecNumber evidence="1">2.1.1.166</ecNumber>
    </recommendedName>
    <alternativeName>
        <fullName evidence="1">23S rRNA Um2552 methyltransferase</fullName>
    </alternativeName>
    <alternativeName>
        <fullName evidence="1">rRNA (uridine-2'-O-)-methyltransferase</fullName>
    </alternativeName>
</protein>
<gene>
    <name evidence="1" type="primary">rlmE</name>
    <name evidence="1" type="synonym">rrmJ</name>
    <name type="ordered locus">NP_1238A</name>
</gene>
<sequence>MTRKDDYYNRAKQQGYRSRAAYKLKQLDEAADLINEGDTVVDLGAAPGGWLQVANELAGEAGTVVGVDLQRIDPIEGVETVRGDMTEDATREKVRALVGEADVVISDMAPNMTGEYSLDHARSVHLARMAFETALDLLAPNGDLVAKVFEGPDTDDLRADIDREFEYVRTIHPDASRDSSSELFMVAKGRLTAPVREGDTLEVEIDNLGDEGDGVAKVDGYTLFVSGAEPGDAPEVRVTDVKPRFGFAETLE</sequence>
<evidence type="ECO:0000255" key="1">
    <source>
        <dbReference type="HAMAP-Rule" id="MF_01547"/>
    </source>
</evidence>